<feature type="chain" id="PRO_1000127795" description="dTTP/UTP pyrophosphatase">
    <location>
        <begin position="1"/>
        <end position="192"/>
    </location>
</feature>
<feature type="active site" description="Proton acceptor" evidence="1">
    <location>
        <position position="75"/>
    </location>
</feature>
<feature type="site" description="Important for substrate specificity" evidence="1">
    <location>
        <position position="14"/>
    </location>
</feature>
<feature type="site" description="Important for substrate specificity" evidence="1">
    <location>
        <position position="76"/>
    </location>
</feature>
<feature type="site" description="Important for substrate specificity" evidence="1">
    <location>
        <position position="158"/>
    </location>
</feature>
<comment type="function">
    <text evidence="1">Nucleoside triphosphate pyrophosphatase that hydrolyzes dTTP and UTP. May have a dual role in cell division arrest and in preventing the incorporation of modified nucleotides into cellular nucleic acids.</text>
</comment>
<comment type="catalytic activity">
    <reaction evidence="1">
        <text>dTTP + H2O = dTMP + diphosphate + H(+)</text>
        <dbReference type="Rhea" id="RHEA:28534"/>
        <dbReference type="ChEBI" id="CHEBI:15377"/>
        <dbReference type="ChEBI" id="CHEBI:15378"/>
        <dbReference type="ChEBI" id="CHEBI:33019"/>
        <dbReference type="ChEBI" id="CHEBI:37568"/>
        <dbReference type="ChEBI" id="CHEBI:63528"/>
        <dbReference type="EC" id="3.6.1.9"/>
    </reaction>
</comment>
<comment type="catalytic activity">
    <reaction evidence="1">
        <text>UTP + H2O = UMP + diphosphate + H(+)</text>
        <dbReference type="Rhea" id="RHEA:29395"/>
        <dbReference type="ChEBI" id="CHEBI:15377"/>
        <dbReference type="ChEBI" id="CHEBI:15378"/>
        <dbReference type="ChEBI" id="CHEBI:33019"/>
        <dbReference type="ChEBI" id="CHEBI:46398"/>
        <dbReference type="ChEBI" id="CHEBI:57865"/>
        <dbReference type="EC" id="3.6.1.9"/>
    </reaction>
</comment>
<comment type="cofactor">
    <cofactor evidence="1">
        <name>a divalent metal cation</name>
        <dbReference type="ChEBI" id="CHEBI:60240"/>
    </cofactor>
</comment>
<comment type="subcellular location">
    <subcellularLocation>
        <location evidence="1">Cytoplasm</location>
    </subcellularLocation>
</comment>
<comment type="similarity">
    <text evidence="1">Belongs to the Maf family. YhdE subfamily.</text>
</comment>
<keyword id="KW-0963">Cytoplasm</keyword>
<keyword id="KW-0378">Hydrolase</keyword>
<keyword id="KW-0546">Nucleotide metabolism</keyword>
<keyword id="KW-1185">Reference proteome</keyword>
<accession>B4SA80</accession>
<name>NTPPA_PELPB</name>
<organism>
    <name type="scientific">Pelodictyon phaeoclathratiforme (strain DSM 5477 / BU-1)</name>
    <dbReference type="NCBI Taxonomy" id="324925"/>
    <lineage>
        <taxon>Bacteria</taxon>
        <taxon>Pseudomonadati</taxon>
        <taxon>Chlorobiota</taxon>
        <taxon>Chlorobiia</taxon>
        <taxon>Chlorobiales</taxon>
        <taxon>Chlorobiaceae</taxon>
        <taxon>Chlorobium/Pelodictyon group</taxon>
        <taxon>Pelodictyon</taxon>
    </lineage>
</organism>
<proteinExistence type="inferred from homology"/>
<dbReference type="EC" id="3.6.1.9" evidence="1"/>
<dbReference type="EMBL" id="CP001110">
    <property type="protein sequence ID" value="ACF43776.1"/>
    <property type="molecule type" value="Genomic_DNA"/>
</dbReference>
<dbReference type="RefSeq" id="WP_012508264.1">
    <property type="nucleotide sequence ID" value="NC_011060.1"/>
</dbReference>
<dbReference type="SMR" id="B4SA80"/>
<dbReference type="STRING" id="324925.Ppha_1527"/>
<dbReference type="KEGG" id="pph:Ppha_1527"/>
<dbReference type="eggNOG" id="COG0424">
    <property type="taxonomic scope" value="Bacteria"/>
</dbReference>
<dbReference type="HOGENOM" id="CLU_040416_0_0_10"/>
<dbReference type="OrthoDB" id="9807767at2"/>
<dbReference type="Proteomes" id="UP000002724">
    <property type="component" value="Chromosome"/>
</dbReference>
<dbReference type="GO" id="GO:0005737">
    <property type="term" value="C:cytoplasm"/>
    <property type="evidence" value="ECO:0007669"/>
    <property type="project" value="UniProtKB-SubCell"/>
</dbReference>
<dbReference type="GO" id="GO:0036218">
    <property type="term" value="F:dTTP diphosphatase activity"/>
    <property type="evidence" value="ECO:0007669"/>
    <property type="project" value="RHEA"/>
</dbReference>
<dbReference type="GO" id="GO:0036221">
    <property type="term" value="F:UTP diphosphatase activity"/>
    <property type="evidence" value="ECO:0007669"/>
    <property type="project" value="RHEA"/>
</dbReference>
<dbReference type="GO" id="GO:0009117">
    <property type="term" value="P:nucleotide metabolic process"/>
    <property type="evidence" value="ECO:0007669"/>
    <property type="project" value="UniProtKB-KW"/>
</dbReference>
<dbReference type="CDD" id="cd00555">
    <property type="entry name" value="Maf"/>
    <property type="match status" value="1"/>
</dbReference>
<dbReference type="Gene3D" id="3.90.950.10">
    <property type="match status" value="1"/>
</dbReference>
<dbReference type="HAMAP" id="MF_00528">
    <property type="entry name" value="Maf"/>
    <property type="match status" value="1"/>
</dbReference>
<dbReference type="InterPro" id="IPR029001">
    <property type="entry name" value="ITPase-like_fam"/>
</dbReference>
<dbReference type="InterPro" id="IPR003697">
    <property type="entry name" value="Maf-like"/>
</dbReference>
<dbReference type="NCBIfam" id="TIGR00172">
    <property type="entry name" value="maf"/>
    <property type="match status" value="1"/>
</dbReference>
<dbReference type="PANTHER" id="PTHR43213">
    <property type="entry name" value="BIFUNCTIONAL DTTP/UTP PYROPHOSPHATASE/METHYLTRANSFERASE PROTEIN-RELATED"/>
    <property type="match status" value="1"/>
</dbReference>
<dbReference type="PANTHER" id="PTHR43213:SF5">
    <property type="entry name" value="BIFUNCTIONAL DTTP_UTP PYROPHOSPHATASE_METHYLTRANSFERASE PROTEIN-RELATED"/>
    <property type="match status" value="1"/>
</dbReference>
<dbReference type="Pfam" id="PF02545">
    <property type="entry name" value="Maf"/>
    <property type="match status" value="1"/>
</dbReference>
<dbReference type="PIRSF" id="PIRSF006305">
    <property type="entry name" value="Maf"/>
    <property type="match status" value="1"/>
</dbReference>
<dbReference type="SUPFAM" id="SSF52972">
    <property type="entry name" value="ITPase-like"/>
    <property type="match status" value="1"/>
</dbReference>
<evidence type="ECO:0000255" key="1">
    <source>
        <dbReference type="HAMAP-Rule" id="MF_00528"/>
    </source>
</evidence>
<protein>
    <recommendedName>
        <fullName evidence="1">dTTP/UTP pyrophosphatase</fullName>
        <shortName evidence="1">dTTPase/UTPase</shortName>
        <ecNumber evidence="1">3.6.1.9</ecNumber>
    </recommendedName>
    <alternativeName>
        <fullName evidence="1">Nucleoside triphosphate pyrophosphatase</fullName>
    </alternativeName>
    <alternativeName>
        <fullName evidence="1">Nucleotide pyrophosphatase</fullName>
        <shortName evidence="1">Nucleotide PPase</shortName>
    </alternativeName>
</protein>
<sequence>MGKPALILASQSPRRRDILSLTLIPFETMAIETRETLDPTSSIEENVTKIALEKAECAAALLPKQNGKTIILTADTVVAKGNRIYGKPAGFDEAFEMLKSLQNRSHRVYTGFVLLCCDKIHTECVTTTVELEPMSDNEIKRYILSEKPYDKAGSYGIQDPLMACYIRRIEGCYHNVVGLPLSRVCKALKTFL</sequence>
<reference key="1">
    <citation type="submission" date="2008-06" db="EMBL/GenBank/DDBJ databases">
        <title>Complete sequence of Pelodictyon phaeoclathratiforme BU-1.</title>
        <authorList>
            <consortium name="US DOE Joint Genome Institute"/>
            <person name="Lucas S."/>
            <person name="Copeland A."/>
            <person name="Lapidus A."/>
            <person name="Glavina del Rio T."/>
            <person name="Dalin E."/>
            <person name="Tice H."/>
            <person name="Bruce D."/>
            <person name="Goodwin L."/>
            <person name="Pitluck S."/>
            <person name="Schmutz J."/>
            <person name="Larimer F."/>
            <person name="Land M."/>
            <person name="Hauser L."/>
            <person name="Kyrpides N."/>
            <person name="Mikhailova N."/>
            <person name="Liu Z."/>
            <person name="Li T."/>
            <person name="Zhao F."/>
            <person name="Overmann J."/>
            <person name="Bryant D.A."/>
            <person name="Richardson P."/>
        </authorList>
    </citation>
    <scope>NUCLEOTIDE SEQUENCE [LARGE SCALE GENOMIC DNA]</scope>
    <source>
        <strain>DSM 5477 / BU-1</strain>
    </source>
</reference>
<gene>
    <name type="ordered locus">Ppha_1527</name>
</gene>